<proteinExistence type="inferred from homology"/>
<reference key="1">
    <citation type="journal article" date="1994" name="Microb. Pathog.">
        <title>Characterization of three putative Serpulina hyodysenteriae hemolysins.</title>
        <authorList>
            <person name="Ter Huurne A.A.H.M."/>
            <person name="Muir S."/>
            <person name="van Houten M."/>
            <person name="van der Zeijst B.A.M."/>
            <person name="Gaastra W."/>
            <person name="Kusters J.G."/>
        </authorList>
    </citation>
    <scope>NUCLEOTIDE SEQUENCE [GENOMIC DNA]</scope>
    <source>
        <strain>B204</strain>
    </source>
</reference>
<name>HLYC_BRAHO</name>
<sequence>MPIKKLISKIVKKKDSDTEKNNYINLSALTEAEREIITNTIELKSKSVREIMVPRVDVVMIPMESSYDKVIKAFNRDRNSRIPVYKDGIDDIVGVLYVKDLIDAEEKNFSLKKILHKPLFVPISISLMELLKNFREKQIHIAMVVDEYGGFSGIVSMEDVLEQIIGDIRDEYDEEDEEIKSNDDGTYLVDARTRIDDFNKYEILPPIPDDEADTVGGFLFSYLGRLPKRNEDIEYNGYSFTVVGKSGNIVTKIRIEKLKKDNTAKNKD</sequence>
<feature type="chain" id="PRO_0000088354" description="Hemolysin C">
    <location>
        <begin position="1"/>
        <end position="268"/>
    </location>
</feature>
<feature type="domain" description="CBS 1" evidence="1">
    <location>
        <begin position="52"/>
        <end position="111"/>
    </location>
</feature>
<feature type="domain" description="CBS 2" evidence="1">
    <location>
        <begin position="114"/>
        <end position="171"/>
    </location>
</feature>
<gene>
    <name type="primary">tlyC</name>
</gene>
<evidence type="ECO:0000255" key="1">
    <source>
        <dbReference type="PROSITE-ProRule" id="PRU00703"/>
    </source>
</evidence>
<evidence type="ECO:0000305" key="2"/>
<dbReference type="EMBL" id="X73141">
    <property type="protein sequence ID" value="CAA51657.1"/>
    <property type="molecule type" value="Genomic_DNA"/>
</dbReference>
<dbReference type="PIR" id="T46749">
    <property type="entry name" value="T46749"/>
</dbReference>
<dbReference type="RefSeq" id="WP_012670944.1">
    <property type="nucleotide sequence ID" value="NZ_MKXF01000005.1"/>
</dbReference>
<dbReference type="SMR" id="Q54318"/>
<dbReference type="TCDB" id="1.C.126.1.1">
    <property type="family name" value="the hlyc haemolysin (hlyc) family"/>
</dbReference>
<dbReference type="GeneID" id="63962524"/>
<dbReference type="OMA" id="QMISIKA"/>
<dbReference type="GO" id="GO:0005886">
    <property type="term" value="C:plasma membrane"/>
    <property type="evidence" value="ECO:0007669"/>
    <property type="project" value="TreeGrafter"/>
</dbReference>
<dbReference type="GO" id="GO:0050660">
    <property type="term" value="F:flavin adenine dinucleotide binding"/>
    <property type="evidence" value="ECO:0007669"/>
    <property type="project" value="InterPro"/>
</dbReference>
<dbReference type="GO" id="GO:0090729">
    <property type="term" value="F:toxin activity"/>
    <property type="evidence" value="ECO:0007669"/>
    <property type="project" value="UniProtKB-KW"/>
</dbReference>
<dbReference type="GO" id="GO:0031640">
    <property type="term" value="P:killing of cells of another organism"/>
    <property type="evidence" value="ECO:0007669"/>
    <property type="project" value="UniProtKB-KW"/>
</dbReference>
<dbReference type="CDD" id="cd04590">
    <property type="entry name" value="CBS_pair_CorC_HlyC_assoc"/>
    <property type="match status" value="1"/>
</dbReference>
<dbReference type="FunFam" id="3.10.580.10:FF:000002">
    <property type="entry name" value="Magnesium/cobalt efflux protein CorC"/>
    <property type="match status" value="1"/>
</dbReference>
<dbReference type="Gene3D" id="3.30.465.10">
    <property type="match status" value="1"/>
</dbReference>
<dbReference type="Gene3D" id="3.10.580.10">
    <property type="entry name" value="CBS-domain"/>
    <property type="match status" value="1"/>
</dbReference>
<dbReference type="InterPro" id="IPR000644">
    <property type="entry name" value="CBS_dom"/>
</dbReference>
<dbReference type="InterPro" id="IPR046342">
    <property type="entry name" value="CBS_dom_sf"/>
</dbReference>
<dbReference type="InterPro" id="IPR036318">
    <property type="entry name" value="FAD-bd_PCMH-like_sf"/>
</dbReference>
<dbReference type="InterPro" id="IPR016169">
    <property type="entry name" value="FAD-bd_PCMH_sub2"/>
</dbReference>
<dbReference type="InterPro" id="IPR044751">
    <property type="entry name" value="Ion_transp-like_CBS"/>
</dbReference>
<dbReference type="InterPro" id="IPR005170">
    <property type="entry name" value="Transptr-assoc_dom"/>
</dbReference>
<dbReference type="PANTHER" id="PTHR22777">
    <property type="entry name" value="HEMOLYSIN-RELATED"/>
    <property type="match status" value="1"/>
</dbReference>
<dbReference type="PANTHER" id="PTHR22777:SF17">
    <property type="entry name" value="UPF0053 PROTEIN SLL0260"/>
    <property type="match status" value="1"/>
</dbReference>
<dbReference type="Pfam" id="PF00571">
    <property type="entry name" value="CBS"/>
    <property type="match status" value="2"/>
</dbReference>
<dbReference type="Pfam" id="PF03471">
    <property type="entry name" value="CorC_HlyC"/>
    <property type="match status" value="1"/>
</dbReference>
<dbReference type="SMART" id="SM00116">
    <property type="entry name" value="CBS"/>
    <property type="match status" value="2"/>
</dbReference>
<dbReference type="SMART" id="SM01091">
    <property type="entry name" value="CorC_HlyC"/>
    <property type="match status" value="1"/>
</dbReference>
<dbReference type="SUPFAM" id="SSF54631">
    <property type="entry name" value="CBS-domain pair"/>
    <property type="match status" value="1"/>
</dbReference>
<dbReference type="SUPFAM" id="SSF56176">
    <property type="entry name" value="FAD-binding/transporter-associated domain-like"/>
    <property type="match status" value="1"/>
</dbReference>
<dbReference type="PROSITE" id="PS51371">
    <property type="entry name" value="CBS"/>
    <property type="match status" value="2"/>
</dbReference>
<keyword id="KW-0129">CBS domain</keyword>
<keyword id="KW-0204">Cytolysis</keyword>
<keyword id="KW-0354">Hemolysis</keyword>
<keyword id="KW-0677">Repeat</keyword>
<keyword id="KW-0800">Toxin</keyword>
<keyword id="KW-0843">Virulence</keyword>
<comment type="function">
    <text>Bacterial hemolysins are exotoxins that attack blood cell membranes and cause cell rupture by mechanisms not clearly defined.</text>
</comment>
<comment type="similarity">
    <text evidence="2">Belongs to the UPF0053 family.</text>
</comment>
<organism>
    <name type="scientific">Brachyspira hyodysenteriae</name>
    <name type="common">Treponema hyodysenteriae</name>
    <dbReference type="NCBI Taxonomy" id="159"/>
    <lineage>
        <taxon>Bacteria</taxon>
        <taxon>Pseudomonadati</taxon>
        <taxon>Spirochaetota</taxon>
        <taxon>Spirochaetia</taxon>
        <taxon>Brachyspirales</taxon>
        <taxon>Brachyspiraceae</taxon>
        <taxon>Brachyspira</taxon>
    </lineage>
</organism>
<accession>Q54318</accession>
<protein>
    <recommendedName>
        <fullName>Hemolysin C</fullName>
    </recommendedName>
</protein>